<keyword id="KW-0090">Biological rhythms</keyword>
<keyword id="KW-0963">Cytoplasm</keyword>
<keyword id="KW-0539">Nucleus</keyword>
<keyword id="KW-0597">Phosphoprotein</keyword>
<keyword id="KW-0677">Repeat</keyword>
<accession>P91686</accession>
<gene>
    <name type="primary">per</name>
</gene>
<organism>
    <name type="scientific">Drosophila nebulosa</name>
    <name type="common">Fruit fly</name>
    <dbReference type="NCBI Taxonomy" id="7271"/>
    <lineage>
        <taxon>Eukaryota</taxon>
        <taxon>Metazoa</taxon>
        <taxon>Ecdysozoa</taxon>
        <taxon>Arthropoda</taxon>
        <taxon>Hexapoda</taxon>
        <taxon>Insecta</taxon>
        <taxon>Pterygota</taxon>
        <taxon>Neoptera</taxon>
        <taxon>Endopterygota</taxon>
        <taxon>Diptera</taxon>
        <taxon>Brachycera</taxon>
        <taxon>Muscomorpha</taxon>
        <taxon>Ephydroidea</taxon>
        <taxon>Drosophilidae</taxon>
        <taxon>Drosophila</taxon>
        <taxon>Sophophora</taxon>
    </lineage>
</organism>
<sequence>SSTETPPSYNQLNYNENLLRFFNSKPVTAPVPVELDPPKVESSYVSSAREDARSTLSPVQGFEGSGGSGSSGNFTTGSNLHMSSVTNTSNAGTGTSGTGNSGDGGGGGAGDGPGSGAVPPVTLTESLLNKHNDEMEKFMLKNDRESRGWSGEKNKKSANDTLKMVEYSGPGPGHGHGIKRGGSHSWEGEANKPKQQLTLNAGGMPPLVDIHASSSSLSKCQTSVAGGGGGGGAGSASGTCGTGNNGAGGGGGSNAQSSTNQYTQSGLSCTQNINLWPPFSVGITTPTSVLSTHMAVAQSSFSPQHSLFPTFYYIPASIAASSPASGTSPNPRPHKHTHVHPSSEQPSTSQGAAATMPLQYMTGVMYPHPSLFYTHPAAAAATAMV</sequence>
<proteinExistence type="inferred from homology"/>
<comment type="function">
    <text evidence="1">Essential for biological clock functions. Determines the period length of circadian and ultradian rhythms; an increase in PER dosage leads to shortened circadian rhythms and a decrease leads to lengthened circadian rhythms. Essential for the circadian rhythmicity of locomotor activity, eclosion behavior, and for the rhythmic component of the male courtship song that originates in the thoracic nervous system. The biological cycle depends on the rhythmic formation and nuclear localization of the TIM-PER complex. Light induces the degradation of TIM, which promotes elimination of PER. Nuclear activity of the heterodimer coordinatively regulates PER and TIM transcription through a negative feedback loop. Behaves as a negative element in circadian transcriptional loop. Does not appear to bind DNA, suggesting indirect transcriptional inhibition (By similarity).</text>
</comment>
<comment type="subunit">
    <text evidence="1">Forms a heterodimer with timeless (TIM); the complex then translocates into the nucleus.</text>
</comment>
<comment type="subcellular location">
    <subcellularLocation>
        <location evidence="1">Nucleus</location>
    </subcellularLocation>
    <subcellularLocation>
        <location evidence="1">Cytoplasm</location>
        <location evidence="1">Perinuclear region</location>
    </subcellularLocation>
    <text evidence="1">Nuclear at specific periods of the day. First accumulates in the perinuclear region about one hour before translocation into the nucleus. Interaction with Tim is required for nuclear localization (By similarity).</text>
</comment>
<comment type="PTM">
    <text evidence="1">Phosphorylated with a circadian rhythmicity, probably by the double-time protein (dbt). Phosphorylation could be implicated in the stability of per monomer and in the formation of heterodimer per-tim (By similarity).</text>
</comment>
<feature type="chain" id="PRO_0000162599" description="Period circadian protein">
    <location>
        <begin position="1" status="less than"/>
        <end position="385" status="greater than"/>
    </location>
</feature>
<feature type="region of interest" description="Disordered" evidence="2">
    <location>
        <begin position="28"/>
        <end position="121"/>
    </location>
</feature>
<feature type="region of interest" description="Disordered" evidence="2">
    <location>
        <begin position="169"/>
        <end position="189"/>
    </location>
</feature>
<feature type="region of interest" description="Disordered" evidence="2">
    <location>
        <begin position="322"/>
        <end position="351"/>
    </location>
</feature>
<feature type="compositionally biased region" description="Low complexity" evidence="2">
    <location>
        <begin position="71"/>
        <end position="93"/>
    </location>
</feature>
<feature type="compositionally biased region" description="Gly residues" evidence="2">
    <location>
        <begin position="94"/>
        <end position="115"/>
    </location>
</feature>
<feature type="compositionally biased region" description="Polar residues" evidence="2">
    <location>
        <begin position="340"/>
        <end position="351"/>
    </location>
</feature>
<feature type="non-terminal residue">
    <location>
        <position position="1"/>
    </location>
</feature>
<feature type="non-terminal residue">
    <location>
        <position position="385"/>
    </location>
</feature>
<name>PER_DRONE</name>
<reference key="1">
    <citation type="journal article" date="1997" name="Mol. Biol. Evol.">
        <title>Interspecific and intraspecific comparisons of the period locus in the Drosophila willistoni sibling species.</title>
        <authorList>
            <person name="Gleason J.M."/>
            <person name="Powell J.R."/>
        </authorList>
    </citation>
    <scope>NUCLEOTIDE SEQUENCE [GENOMIC DNA]</scope>
    <source>
        <strain>0761.0 Palmira / Colombia</strain>
    </source>
</reference>
<evidence type="ECO:0000250" key="1"/>
<evidence type="ECO:0000256" key="2">
    <source>
        <dbReference type="SAM" id="MobiDB-lite"/>
    </source>
</evidence>
<dbReference type="EMBL" id="U51090">
    <property type="protein sequence ID" value="AAB41386.1"/>
    <property type="molecule type" value="Genomic_DNA"/>
</dbReference>
<dbReference type="GO" id="GO:0005634">
    <property type="term" value="C:nucleus"/>
    <property type="evidence" value="ECO:0007669"/>
    <property type="project" value="UniProtKB-SubCell"/>
</dbReference>
<dbReference type="GO" id="GO:0048471">
    <property type="term" value="C:perinuclear region of cytoplasm"/>
    <property type="evidence" value="ECO:0007669"/>
    <property type="project" value="UniProtKB-SubCell"/>
</dbReference>
<dbReference type="GO" id="GO:0000976">
    <property type="term" value="F:transcription cis-regulatory region binding"/>
    <property type="evidence" value="ECO:0007669"/>
    <property type="project" value="TreeGrafter"/>
</dbReference>
<dbReference type="GO" id="GO:0001222">
    <property type="term" value="F:transcription corepressor binding"/>
    <property type="evidence" value="ECO:0007669"/>
    <property type="project" value="TreeGrafter"/>
</dbReference>
<dbReference type="GO" id="GO:0032922">
    <property type="term" value="P:circadian regulation of gene expression"/>
    <property type="evidence" value="ECO:0007669"/>
    <property type="project" value="TreeGrafter"/>
</dbReference>
<dbReference type="GO" id="GO:0043153">
    <property type="term" value="P:entrainment of circadian clock by photoperiod"/>
    <property type="evidence" value="ECO:0007669"/>
    <property type="project" value="TreeGrafter"/>
</dbReference>
<dbReference type="GO" id="GO:0000122">
    <property type="term" value="P:negative regulation of transcription by RNA polymerase II"/>
    <property type="evidence" value="ECO:0007669"/>
    <property type="project" value="TreeGrafter"/>
</dbReference>
<dbReference type="InterPro" id="IPR050760">
    <property type="entry name" value="Period_circadian_regulator"/>
</dbReference>
<dbReference type="PANTHER" id="PTHR11269">
    <property type="entry name" value="PERIOD CIRCADIAN PROTEIN"/>
    <property type="match status" value="1"/>
</dbReference>
<dbReference type="PANTHER" id="PTHR11269:SF16">
    <property type="entry name" value="PERIOD CIRCADIAN PROTEIN"/>
    <property type="match status" value="1"/>
</dbReference>
<protein>
    <recommendedName>
        <fullName>Period circadian protein</fullName>
    </recommendedName>
</protein>